<accession>Q5GXL3</accession>
<feature type="chain" id="PRO_0000257648" description="Dual-action ribosomal maturation protein DarP">
    <location>
        <begin position="1"/>
        <end position="193"/>
    </location>
</feature>
<feature type="region of interest" description="Disordered" evidence="2">
    <location>
        <begin position="1"/>
        <end position="20"/>
    </location>
</feature>
<feature type="region of interest" description="Disordered" evidence="2">
    <location>
        <begin position="171"/>
        <end position="193"/>
    </location>
</feature>
<feature type="compositionally biased region" description="Basic and acidic residues" evidence="2">
    <location>
        <begin position="1"/>
        <end position="10"/>
    </location>
</feature>
<feature type="compositionally biased region" description="Acidic residues" evidence="2">
    <location>
        <begin position="181"/>
        <end position="193"/>
    </location>
</feature>
<protein>
    <recommendedName>
        <fullName evidence="1">Dual-action ribosomal maturation protein DarP</fullName>
    </recommendedName>
    <alternativeName>
        <fullName evidence="1">Large ribosomal subunit assembly factor DarP</fullName>
    </alternativeName>
</protein>
<keyword id="KW-0963">Cytoplasm</keyword>
<keyword id="KW-1185">Reference proteome</keyword>
<keyword id="KW-0690">Ribosome biogenesis</keyword>
<keyword id="KW-0694">RNA-binding</keyword>
<keyword id="KW-0699">rRNA-binding</keyword>
<evidence type="ECO:0000255" key="1">
    <source>
        <dbReference type="HAMAP-Rule" id="MF_00765"/>
    </source>
</evidence>
<evidence type="ECO:0000256" key="2">
    <source>
        <dbReference type="SAM" id="MobiDB-lite"/>
    </source>
</evidence>
<gene>
    <name evidence="1" type="primary">darP</name>
    <name type="ordered locus">XOO3304</name>
</gene>
<name>DARP_XANOR</name>
<sequence length="193" mass="21978">MRGRDEDTGEFRGASRSQQRREALEIFDLGEKLVALTPAQLAKLPVPESLIQHIEESKRITSHIAHKRQLAFLAKHMRREDDETLAAIRDALDANSDTARREVAAIHRVERWRERLLADGDVALAELLEAYPAADRQQLRQLVRNAIHERAKNKPPRAYRELFQVLRDLSQEQGLESGDSGLEDGESALEDDE</sequence>
<comment type="function">
    <text evidence="1">Member of a network of 50S ribosomal subunit biogenesis factors which assembles along the 30S-50S interface, preventing incorrect 23S rRNA structures from forming. Promotes peptidyl transferase center (PTC) maturation.</text>
</comment>
<comment type="subcellular location">
    <subcellularLocation>
        <location evidence="1">Cytoplasm</location>
    </subcellularLocation>
    <text evidence="1">Associates with late stage pre-50S ribosomal subunits.</text>
</comment>
<comment type="similarity">
    <text evidence="1">Belongs to the DarP family.</text>
</comment>
<reference key="1">
    <citation type="journal article" date="2005" name="Nucleic Acids Res.">
        <title>The genome sequence of Xanthomonas oryzae pathovar oryzae KACC10331, the bacterial blight pathogen of rice.</title>
        <authorList>
            <person name="Lee B.-M."/>
            <person name="Park Y.-J."/>
            <person name="Park D.-S."/>
            <person name="Kang H.-W."/>
            <person name="Kim J.-G."/>
            <person name="Song E.-S."/>
            <person name="Park I.-C."/>
            <person name="Yoon U.-H."/>
            <person name="Hahn J.-H."/>
            <person name="Koo B.-S."/>
            <person name="Lee G.-B."/>
            <person name="Kim H."/>
            <person name="Park H.-S."/>
            <person name="Yoon K.-O."/>
            <person name="Kim J.-H."/>
            <person name="Jung C.-H."/>
            <person name="Koh N.-H."/>
            <person name="Seo J.-S."/>
            <person name="Go S.-J."/>
        </authorList>
    </citation>
    <scope>NUCLEOTIDE SEQUENCE [LARGE SCALE GENOMIC DNA]</scope>
    <source>
        <strain>KACC10331 / KXO85</strain>
    </source>
</reference>
<proteinExistence type="inferred from homology"/>
<organism>
    <name type="scientific">Xanthomonas oryzae pv. oryzae (strain KACC10331 / KXO85)</name>
    <dbReference type="NCBI Taxonomy" id="291331"/>
    <lineage>
        <taxon>Bacteria</taxon>
        <taxon>Pseudomonadati</taxon>
        <taxon>Pseudomonadota</taxon>
        <taxon>Gammaproteobacteria</taxon>
        <taxon>Lysobacterales</taxon>
        <taxon>Lysobacteraceae</taxon>
        <taxon>Xanthomonas</taxon>
    </lineage>
</organism>
<dbReference type="EMBL" id="AE013598">
    <property type="protein sequence ID" value="AAW76558.1"/>
    <property type="molecule type" value="Genomic_DNA"/>
</dbReference>
<dbReference type="SMR" id="Q5GXL3"/>
<dbReference type="STRING" id="291331.XOO3304"/>
<dbReference type="KEGG" id="xoo:XOO3304"/>
<dbReference type="PATRIC" id="fig|291331.8.peg.3659"/>
<dbReference type="HOGENOM" id="CLU_106757_0_0_6"/>
<dbReference type="Proteomes" id="UP000006735">
    <property type="component" value="Chromosome"/>
</dbReference>
<dbReference type="GO" id="GO:0005829">
    <property type="term" value="C:cytosol"/>
    <property type="evidence" value="ECO:0007669"/>
    <property type="project" value="TreeGrafter"/>
</dbReference>
<dbReference type="GO" id="GO:0043022">
    <property type="term" value="F:ribosome binding"/>
    <property type="evidence" value="ECO:0007669"/>
    <property type="project" value="UniProtKB-UniRule"/>
</dbReference>
<dbReference type="GO" id="GO:0019843">
    <property type="term" value="F:rRNA binding"/>
    <property type="evidence" value="ECO:0007669"/>
    <property type="project" value="UniProtKB-UniRule"/>
</dbReference>
<dbReference type="GO" id="GO:1902626">
    <property type="term" value="P:assembly of large subunit precursor of preribosome"/>
    <property type="evidence" value="ECO:0007669"/>
    <property type="project" value="UniProtKB-UniRule"/>
</dbReference>
<dbReference type="CDD" id="cd16331">
    <property type="entry name" value="YjgA-like"/>
    <property type="match status" value="1"/>
</dbReference>
<dbReference type="FunFam" id="1.10.60.30:FF:000002">
    <property type="entry name" value="UPF0307 protein YjgA"/>
    <property type="match status" value="1"/>
</dbReference>
<dbReference type="Gene3D" id="1.10.60.30">
    <property type="entry name" value="PSPTO4464-like domains"/>
    <property type="match status" value="2"/>
</dbReference>
<dbReference type="HAMAP" id="MF_00765">
    <property type="entry name" value="DarP"/>
    <property type="match status" value="1"/>
</dbReference>
<dbReference type="InterPro" id="IPR006839">
    <property type="entry name" value="DarP"/>
</dbReference>
<dbReference type="InterPro" id="IPR023153">
    <property type="entry name" value="DarP_sf"/>
</dbReference>
<dbReference type="NCBIfam" id="NF003593">
    <property type="entry name" value="PRK05255.1-1"/>
    <property type="match status" value="1"/>
</dbReference>
<dbReference type="PANTHER" id="PTHR38101">
    <property type="entry name" value="UPF0307 PROTEIN YJGA"/>
    <property type="match status" value="1"/>
</dbReference>
<dbReference type="PANTHER" id="PTHR38101:SF1">
    <property type="entry name" value="UPF0307 PROTEIN YJGA"/>
    <property type="match status" value="1"/>
</dbReference>
<dbReference type="Pfam" id="PF04751">
    <property type="entry name" value="DarP"/>
    <property type="match status" value="1"/>
</dbReference>
<dbReference type="PIRSF" id="PIRSF016183">
    <property type="entry name" value="UCP016183"/>
    <property type="match status" value="1"/>
</dbReference>
<dbReference type="SUPFAM" id="SSF158710">
    <property type="entry name" value="PSPTO4464-like"/>
    <property type="match status" value="1"/>
</dbReference>